<name>SYFA_LISMO</name>
<gene>
    <name evidence="1" type="primary">pheS</name>
    <name type="ordered locus">lmo1221</name>
</gene>
<keyword id="KW-0030">Aminoacyl-tRNA synthetase</keyword>
<keyword id="KW-0067">ATP-binding</keyword>
<keyword id="KW-0963">Cytoplasm</keyword>
<keyword id="KW-0436">Ligase</keyword>
<keyword id="KW-0460">Magnesium</keyword>
<keyword id="KW-0479">Metal-binding</keyword>
<keyword id="KW-0547">Nucleotide-binding</keyword>
<keyword id="KW-0648">Protein biosynthesis</keyword>
<keyword id="KW-1185">Reference proteome</keyword>
<reference key="1">
    <citation type="journal article" date="2001" name="Science">
        <title>Comparative genomics of Listeria species.</title>
        <authorList>
            <person name="Glaser P."/>
            <person name="Frangeul L."/>
            <person name="Buchrieser C."/>
            <person name="Rusniok C."/>
            <person name="Amend A."/>
            <person name="Baquero F."/>
            <person name="Berche P."/>
            <person name="Bloecker H."/>
            <person name="Brandt P."/>
            <person name="Chakraborty T."/>
            <person name="Charbit A."/>
            <person name="Chetouani F."/>
            <person name="Couve E."/>
            <person name="de Daruvar A."/>
            <person name="Dehoux P."/>
            <person name="Domann E."/>
            <person name="Dominguez-Bernal G."/>
            <person name="Duchaud E."/>
            <person name="Durant L."/>
            <person name="Dussurget O."/>
            <person name="Entian K.-D."/>
            <person name="Fsihi H."/>
            <person name="Garcia-del Portillo F."/>
            <person name="Garrido P."/>
            <person name="Gautier L."/>
            <person name="Goebel W."/>
            <person name="Gomez-Lopez N."/>
            <person name="Hain T."/>
            <person name="Hauf J."/>
            <person name="Jackson D."/>
            <person name="Jones L.-M."/>
            <person name="Kaerst U."/>
            <person name="Kreft J."/>
            <person name="Kuhn M."/>
            <person name="Kunst F."/>
            <person name="Kurapkat G."/>
            <person name="Madueno E."/>
            <person name="Maitournam A."/>
            <person name="Mata Vicente J."/>
            <person name="Ng E."/>
            <person name="Nedjari H."/>
            <person name="Nordsiek G."/>
            <person name="Novella S."/>
            <person name="de Pablos B."/>
            <person name="Perez-Diaz J.-C."/>
            <person name="Purcell R."/>
            <person name="Remmel B."/>
            <person name="Rose M."/>
            <person name="Schlueter T."/>
            <person name="Simoes N."/>
            <person name="Tierrez A."/>
            <person name="Vazquez-Boland J.-A."/>
            <person name="Voss H."/>
            <person name="Wehland J."/>
            <person name="Cossart P."/>
        </authorList>
    </citation>
    <scope>NUCLEOTIDE SEQUENCE [LARGE SCALE GENOMIC DNA]</scope>
    <source>
        <strain>ATCC BAA-679 / EGD-e</strain>
    </source>
</reference>
<dbReference type="EC" id="6.1.1.20" evidence="1"/>
<dbReference type="EMBL" id="AL591978">
    <property type="protein sequence ID" value="CAC99299.1"/>
    <property type="molecule type" value="Genomic_DNA"/>
</dbReference>
<dbReference type="PIR" id="AE1227">
    <property type="entry name" value="AE1227"/>
</dbReference>
<dbReference type="RefSeq" id="NP_464746.1">
    <property type="nucleotide sequence ID" value="NC_003210.1"/>
</dbReference>
<dbReference type="RefSeq" id="WP_003736387.1">
    <property type="nucleotide sequence ID" value="NZ_CP149495.1"/>
</dbReference>
<dbReference type="SMR" id="Q8Y7Q2"/>
<dbReference type="STRING" id="169963.gene:17593877"/>
<dbReference type="PaxDb" id="169963-lmo1221"/>
<dbReference type="EnsemblBacteria" id="CAC99299">
    <property type="protein sequence ID" value="CAC99299"/>
    <property type="gene ID" value="CAC99299"/>
</dbReference>
<dbReference type="GeneID" id="986046"/>
<dbReference type="KEGG" id="lmo:lmo1221"/>
<dbReference type="PATRIC" id="fig|169963.11.peg.1252"/>
<dbReference type="eggNOG" id="COG0016">
    <property type="taxonomic scope" value="Bacteria"/>
</dbReference>
<dbReference type="HOGENOM" id="CLU_025086_0_1_9"/>
<dbReference type="OrthoDB" id="9800719at2"/>
<dbReference type="PhylomeDB" id="Q8Y7Q2"/>
<dbReference type="BioCyc" id="LMON169963:LMO1221-MONOMER"/>
<dbReference type="Proteomes" id="UP000000817">
    <property type="component" value="Chromosome"/>
</dbReference>
<dbReference type="GO" id="GO:0005737">
    <property type="term" value="C:cytoplasm"/>
    <property type="evidence" value="ECO:0000318"/>
    <property type="project" value="GO_Central"/>
</dbReference>
<dbReference type="GO" id="GO:0005524">
    <property type="term" value="F:ATP binding"/>
    <property type="evidence" value="ECO:0007669"/>
    <property type="project" value="UniProtKB-UniRule"/>
</dbReference>
<dbReference type="GO" id="GO:0140096">
    <property type="term" value="F:catalytic activity, acting on a protein"/>
    <property type="evidence" value="ECO:0007669"/>
    <property type="project" value="UniProtKB-ARBA"/>
</dbReference>
<dbReference type="GO" id="GO:0000287">
    <property type="term" value="F:magnesium ion binding"/>
    <property type="evidence" value="ECO:0007669"/>
    <property type="project" value="UniProtKB-UniRule"/>
</dbReference>
<dbReference type="GO" id="GO:0004826">
    <property type="term" value="F:phenylalanine-tRNA ligase activity"/>
    <property type="evidence" value="ECO:0000318"/>
    <property type="project" value="GO_Central"/>
</dbReference>
<dbReference type="GO" id="GO:0016740">
    <property type="term" value="F:transferase activity"/>
    <property type="evidence" value="ECO:0007669"/>
    <property type="project" value="UniProtKB-ARBA"/>
</dbReference>
<dbReference type="GO" id="GO:0000049">
    <property type="term" value="F:tRNA binding"/>
    <property type="evidence" value="ECO:0007669"/>
    <property type="project" value="InterPro"/>
</dbReference>
<dbReference type="GO" id="GO:0006432">
    <property type="term" value="P:phenylalanyl-tRNA aminoacylation"/>
    <property type="evidence" value="ECO:0000318"/>
    <property type="project" value="GO_Central"/>
</dbReference>
<dbReference type="CDD" id="cd00496">
    <property type="entry name" value="PheRS_alpha_core"/>
    <property type="match status" value="1"/>
</dbReference>
<dbReference type="FunFam" id="3.30.930.10:FF:000003">
    <property type="entry name" value="Phenylalanine--tRNA ligase alpha subunit"/>
    <property type="match status" value="1"/>
</dbReference>
<dbReference type="Gene3D" id="3.30.930.10">
    <property type="entry name" value="Bira Bifunctional Protein, Domain 2"/>
    <property type="match status" value="1"/>
</dbReference>
<dbReference type="HAMAP" id="MF_00281">
    <property type="entry name" value="Phe_tRNA_synth_alpha1"/>
    <property type="match status" value="1"/>
</dbReference>
<dbReference type="InterPro" id="IPR006195">
    <property type="entry name" value="aa-tRNA-synth_II"/>
</dbReference>
<dbReference type="InterPro" id="IPR045864">
    <property type="entry name" value="aa-tRNA-synth_II/BPL/LPL"/>
</dbReference>
<dbReference type="InterPro" id="IPR004529">
    <property type="entry name" value="Phe-tRNA-synth_IIc_asu"/>
</dbReference>
<dbReference type="InterPro" id="IPR004188">
    <property type="entry name" value="Phe-tRNA_ligase_II_N"/>
</dbReference>
<dbReference type="InterPro" id="IPR022911">
    <property type="entry name" value="Phe_tRNA_ligase_alpha1_bac"/>
</dbReference>
<dbReference type="InterPro" id="IPR002319">
    <property type="entry name" value="Phenylalanyl-tRNA_Synthase"/>
</dbReference>
<dbReference type="InterPro" id="IPR010978">
    <property type="entry name" value="tRNA-bd_arm"/>
</dbReference>
<dbReference type="NCBIfam" id="TIGR00468">
    <property type="entry name" value="pheS"/>
    <property type="match status" value="1"/>
</dbReference>
<dbReference type="PANTHER" id="PTHR11538:SF41">
    <property type="entry name" value="PHENYLALANINE--TRNA LIGASE, MITOCHONDRIAL"/>
    <property type="match status" value="1"/>
</dbReference>
<dbReference type="PANTHER" id="PTHR11538">
    <property type="entry name" value="PHENYLALANYL-TRNA SYNTHETASE"/>
    <property type="match status" value="1"/>
</dbReference>
<dbReference type="Pfam" id="PF02912">
    <property type="entry name" value="Phe_tRNA-synt_N"/>
    <property type="match status" value="1"/>
</dbReference>
<dbReference type="Pfam" id="PF01409">
    <property type="entry name" value="tRNA-synt_2d"/>
    <property type="match status" value="1"/>
</dbReference>
<dbReference type="SUPFAM" id="SSF55681">
    <property type="entry name" value="Class II aaRS and biotin synthetases"/>
    <property type="match status" value="1"/>
</dbReference>
<dbReference type="SUPFAM" id="SSF46589">
    <property type="entry name" value="tRNA-binding arm"/>
    <property type="match status" value="1"/>
</dbReference>
<dbReference type="PROSITE" id="PS50862">
    <property type="entry name" value="AA_TRNA_LIGASE_II"/>
    <property type="match status" value="1"/>
</dbReference>
<organism>
    <name type="scientific">Listeria monocytogenes serovar 1/2a (strain ATCC BAA-679 / EGD-e)</name>
    <dbReference type="NCBI Taxonomy" id="169963"/>
    <lineage>
        <taxon>Bacteria</taxon>
        <taxon>Bacillati</taxon>
        <taxon>Bacillota</taxon>
        <taxon>Bacilli</taxon>
        <taxon>Bacillales</taxon>
        <taxon>Listeriaceae</taxon>
        <taxon>Listeria</taxon>
    </lineage>
</organism>
<comment type="catalytic activity">
    <reaction evidence="1">
        <text>tRNA(Phe) + L-phenylalanine + ATP = L-phenylalanyl-tRNA(Phe) + AMP + diphosphate + H(+)</text>
        <dbReference type="Rhea" id="RHEA:19413"/>
        <dbReference type="Rhea" id="RHEA-COMP:9668"/>
        <dbReference type="Rhea" id="RHEA-COMP:9699"/>
        <dbReference type="ChEBI" id="CHEBI:15378"/>
        <dbReference type="ChEBI" id="CHEBI:30616"/>
        <dbReference type="ChEBI" id="CHEBI:33019"/>
        <dbReference type="ChEBI" id="CHEBI:58095"/>
        <dbReference type="ChEBI" id="CHEBI:78442"/>
        <dbReference type="ChEBI" id="CHEBI:78531"/>
        <dbReference type="ChEBI" id="CHEBI:456215"/>
        <dbReference type="EC" id="6.1.1.20"/>
    </reaction>
</comment>
<comment type="cofactor">
    <cofactor evidence="1">
        <name>Mg(2+)</name>
        <dbReference type="ChEBI" id="CHEBI:18420"/>
    </cofactor>
    <text evidence="1">Binds 2 magnesium ions per tetramer.</text>
</comment>
<comment type="subunit">
    <text evidence="1">Tetramer of two alpha and two beta subunits.</text>
</comment>
<comment type="subcellular location">
    <subcellularLocation>
        <location evidence="1">Cytoplasm</location>
    </subcellularLocation>
</comment>
<comment type="similarity">
    <text evidence="1">Belongs to the class-II aminoacyl-tRNA synthetase family. Phe-tRNA synthetase alpha subunit type 1 subfamily.</text>
</comment>
<evidence type="ECO:0000255" key="1">
    <source>
        <dbReference type="HAMAP-Rule" id="MF_00281"/>
    </source>
</evidence>
<sequence>MLEQLQTLKSEAETQINEASDLKTLNDLRVKYLGKKGPMTEIMKQMGKLSAEERPKMGSLANEVRTALTEAISSKQQILETEAINEKLKSETIDVTLPGTAPSIGTKHLLTQVIEEMEDMFIGMGYEIAEGPEVELDYYNFEALNLPKDHPARDMQDSFYITENTLLRTQTSPVQARTMEKHDFSKGPIKVICPGKVYRRDNDDATHSHQFTQIEGLVVGENITFADLKGTLTVLAKTMFGEEREIRLRPSFFPFTEPSVEMDISCFKCGGKGCRVCKGTGWIEILGSGMVHPNVLEMSGIDSTRYSGFAFGLGPERVAMLKYAVDDIRHLYTNDLRFTKQFQSTETGEI</sequence>
<proteinExistence type="inferred from homology"/>
<feature type="chain" id="PRO_0000126725" description="Phenylalanine--tRNA ligase alpha subunit">
    <location>
        <begin position="1"/>
        <end position="350"/>
    </location>
</feature>
<feature type="binding site" evidence="1">
    <location>
        <position position="257"/>
    </location>
    <ligand>
        <name>Mg(2+)</name>
        <dbReference type="ChEBI" id="CHEBI:18420"/>
        <note>shared with beta subunit</note>
    </ligand>
</feature>
<protein>
    <recommendedName>
        <fullName evidence="1">Phenylalanine--tRNA ligase alpha subunit</fullName>
        <ecNumber evidence="1">6.1.1.20</ecNumber>
    </recommendedName>
    <alternativeName>
        <fullName evidence="1">Phenylalanyl-tRNA synthetase alpha subunit</fullName>
        <shortName evidence="1">PheRS</shortName>
    </alternativeName>
</protein>
<accession>Q8Y7Q2</accession>